<evidence type="ECO:0000255" key="1">
    <source>
        <dbReference type="HAMAP-Rule" id="MF_00067"/>
    </source>
</evidence>
<gene>
    <name evidence="1" type="primary">gmhA</name>
    <name type="ordered locus">YPDSF_2871</name>
</gene>
<comment type="function">
    <text evidence="1">Catalyzes the isomerization of sedoheptulose 7-phosphate in D-glycero-D-manno-heptose 7-phosphate.</text>
</comment>
<comment type="catalytic activity">
    <reaction evidence="1">
        <text>2 D-sedoheptulose 7-phosphate = D-glycero-alpha-D-manno-heptose 7-phosphate + D-glycero-beta-D-manno-heptose 7-phosphate</text>
        <dbReference type="Rhea" id="RHEA:27489"/>
        <dbReference type="ChEBI" id="CHEBI:57483"/>
        <dbReference type="ChEBI" id="CHEBI:60203"/>
        <dbReference type="ChEBI" id="CHEBI:60204"/>
        <dbReference type="EC" id="5.3.1.28"/>
    </reaction>
</comment>
<comment type="cofactor">
    <cofactor evidence="1">
        <name>Zn(2+)</name>
        <dbReference type="ChEBI" id="CHEBI:29105"/>
    </cofactor>
    <text evidence="1">Binds 1 zinc ion per subunit.</text>
</comment>
<comment type="pathway">
    <text evidence="1">Carbohydrate biosynthesis; D-glycero-D-manno-heptose 7-phosphate biosynthesis; D-glycero-alpha-D-manno-heptose 7-phosphate and D-glycero-beta-D-manno-heptose 7-phosphate from sedoheptulose 7-phosphate: step 1/1.</text>
</comment>
<comment type="subunit">
    <text evidence="1">Homotetramer.</text>
</comment>
<comment type="subcellular location">
    <subcellularLocation>
        <location evidence="1">Cytoplasm</location>
    </subcellularLocation>
</comment>
<comment type="miscellaneous">
    <text evidence="1">The reaction produces a racemic mixture of D-glycero-alpha-D-manno-heptose 7-phosphate and D-glycero-beta-D-manno-heptose 7-phosphate.</text>
</comment>
<comment type="similarity">
    <text evidence="1">Belongs to the SIS family. GmhA subfamily.</text>
</comment>
<keyword id="KW-0119">Carbohydrate metabolism</keyword>
<keyword id="KW-0963">Cytoplasm</keyword>
<keyword id="KW-0413">Isomerase</keyword>
<keyword id="KW-0479">Metal-binding</keyword>
<keyword id="KW-0862">Zinc</keyword>
<protein>
    <recommendedName>
        <fullName evidence="1">Phosphoheptose isomerase</fullName>
        <ecNumber evidence="1">5.3.1.28</ecNumber>
    </recommendedName>
    <alternativeName>
        <fullName evidence="1">Sedoheptulose 7-phosphate isomerase</fullName>
    </alternativeName>
</protein>
<dbReference type="EC" id="5.3.1.28" evidence="1"/>
<dbReference type="EMBL" id="CP000668">
    <property type="protein sequence ID" value="ABP41233.1"/>
    <property type="molecule type" value="Genomic_DNA"/>
</dbReference>
<dbReference type="SMR" id="A4TPM1"/>
<dbReference type="KEGG" id="ypp:YPDSF_2871"/>
<dbReference type="PATRIC" id="fig|386656.14.peg.134"/>
<dbReference type="UniPathway" id="UPA00041">
    <property type="reaction ID" value="UER00436"/>
</dbReference>
<dbReference type="GO" id="GO:0005737">
    <property type="term" value="C:cytoplasm"/>
    <property type="evidence" value="ECO:0007669"/>
    <property type="project" value="UniProtKB-SubCell"/>
</dbReference>
<dbReference type="GO" id="GO:0097367">
    <property type="term" value="F:carbohydrate derivative binding"/>
    <property type="evidence" value="ECO:0007669"/>
    <property type="project" value="InterPro"/>
</dbReference>
<dbReference type="GO" id="GO:0008968">
    <property type="term" value="F:D-sedoheptulose 7-phosphate isomerase activity"/>
    <property type="evidence" value="ECO:0007669"/>
    <property type="project" value="UniProtKB-UniRule"/>
</dbReference>
<dbReference type="GO" id="GO:0008270">
    <property type="term" value="F:zinc ion binding"/>
    <property type="evidence" value="ECO:0007669"/>
    <property type="project" value="UniProtKB-UniRule"/>
</dbReference>
<dbReference type="GO" id="GO:0005975">
    <property type="term" value="P:carbohydrate metabolic process"/>
    <property type="evidence" value="ECO:0007669"/>
    <property type="project" value="UniProtKB-UniRule"/>
</dbReference>
<dbReference type="GO" id="GO:2001061">
    <property type="term" value="P:D-glycero-D-manno-heptose 7-phosphate biosynthetic process"/>
    <property type="evidence" value="ECO:0007669"/>
    <property type="project" value="UniProtKB-UniPathway"/>
</dbReference>
<dbReference type="CDD" id="cd05006">
    <property type="entry name" value="SIS_GmhA"/>
    <property type="match status" value="1"/>
</dbReference>
<dbReference type="FunFam" id="3.40.50.10490:FF:000013">
    <property type="entry name" value="Phosphoheptose isomerase"/>
    <property type="match status" value="1"/>
</dbReference>
<dbReference type="Gene3D" id="3.40.50.10490">
    <property type="entry name" value="Glucose-6-phosphate isomerase like protein, domain 1"/>
    <property type="match status" value="1"/>
</dbReference>
<dbReference type="HAMAP" id="MF_00067">
    <property type="entry name" value="GmhA"/>
    <property type="match status" value="1"/>
</dbReference>
<dbReference type="InterPro" id="IPR035461">
    <property type="entry name" value="GmhA/DiaA"/>
</dbReference>
<dbReference type="InterPro" id="IPR004515">
    <property type="entry name" value="Phosphoheptose_Isoase"/>
</dbReference>
<dbReference type="InterPro" id="IPR001347">
    <property type="entry name" value="SIS_dom"/>
</dbReference>
<dbReference type="InterPro" id="IPR046348">
    <property type="entry name" value="SIS_dom_sf"/>
</dbReference>
<dbReference type="InterPro" id="IPR050099">
    <property type="entry name" value="SIS_GmhA/DiaA_subfam"/>
</dbReference>
<dbReference type="NCBIfam" id="TIGR00441">
    <property type="entry name" value="gmhA"/>
    <property type="match status" value="1"/>
</dbReference>
<dbReference type="NCBIfam" id="NF001628">
    <property type="entry name" value="PRK00414.1"/>
    <property type="match status" value="1"/>
</dbReference>
<dbReference type="PANTHER" id="PTHR30390:SF7">
    <property type="entry name" value="PHOSPHOHEPTOSE ISOMERASE"/>
    <property type="match status" value="1"/>
</dbReference>
<dbReference type="PANTHER" id="PTHR30390">
    <property type="entry name" value="SEDOHEPTULOSE 7-PHOSPHATE ISOMERASE / DNAA INITIATOR-ASSOCIATING FACTOR FOR REPLICATION INITIATION"/>
    <property type="match status" value="1"/>
</dbReference>
<dbReference type="Pfam" id="PF13580">
    <property type="entry name" value="SIS_2"/>
    <property type="match status" value="1"/>
</dbReference>
<dbReference type="SUPFAM" id="SSF53697">
    <property type="entry name" value="SIS domain"/>
    <property type="match status" value="1"/>
</dbReference>
<dbReference type="PROSITE" id="PS51464">
    <property type="entry name" value="SIS"/>
    <property type="match status" value="1"/>
</dbReference>
<organism>
    <name type="scientific">Yersinia pestis (strain Pestoides F)</name>
    <dbReference type="NCBI Taxonomy" id="386656"/>
    <lineage>
        <taxon>Bacteria</taxon>
        <taxon>Pseudomonadati</taxon>
        <taxon>Pseudomonadota</taxon>
        <taxon>Gammaproteobacteria</taxon>
        <taxon>Enterobacterales</taxon>
        <taxon>Yersiniaceae</taxon>
        <taxon>Yersinia</taxon>
    </lineage>
</organism>
<feature type="chain" id="PRO_1000009106" description="Phosphoheptose isomerase">
    <location>
        <begin position="1"/>
        <end position="193"/>
    </location>
</feature>
<feature type="domain" description="SIS" evidence="1">
    <location>
        <begin position="37"/>
        <end position="193"/>
    </location>
</feature>
<feature type="binding site" evidence="1">
    <location>
        <begin position="52"/>
        <end position="54"/>
    </location>
    <ligand>
        <name>substrate</name>
    </ligand>
</feature>
<feature type="binding site" evidence="1">
    <location>
        <position position="61"/>
    </location>
    <ligand>
        <name>Zn(2+)</name>
        <dbReference type="ChEBI" id="CHEBI:29105"/>
    </ligand>
</feature>
<feature type="binding site" evidence="1">
    <location>
        <position position="65"/>
    </location>
    <ligand>
        <name>substrate</name>
    </ligand>
</feature>
<feature type="binding site" evidence="1">
    <location>
        <position position="65"/>
    </location>
    <ligand>
        <name>Zn(2+)</name>
        <dbReference type="ChEBI" id="CHEBI:29105"/>
    </ligand>
</feature>
<feature type="binding site" evidence="1">
    <location>
        <begin position="93"/>
        <end position="94"/>
    </location>
    <ligand>
        <name>substrate</name>
    </ligand>
</feature>
<feature type="binding site" evidence="1">
    <location>
        <begin position="119"/>
        <end position="121"/>
    </location>
    <ligand>
        <name>substrate</name>
    </ligand>
</feature>
<feature type="binding site" evidence="1">
    <location>
        <position position="124"/>
    </location>
    <ligand>
        <name>substrate</name>
    </ligand>
</feature>
<feature type="binding site" evidence="1">
    <location>
        <position position="172"/>
    </location>
    <ligand>
        <name>substrate</name>
    </ligand>
</feature>
<feature type="binding site" evidence="1">
    <location>
        <position position="172"/>
    </location>
    <ligand>
        <name>Zn(2+)</name>
        <dbReference type="ChEBI" id="CHEBI:29105"/>
    </ligand>
</feature>
<feature type="binding site" evidence="1">
    <location>
        <position position="180"/>
    </location>
    <ligand>
        <name>Zn(2+)</name>
        <dbReference type="ChEBI" id="CHEBI:29105"/>
    </ligand>
</feature>
<reference key="1">
    <citation type="submission" date="2007-02" db="EMBL/GenBank/DDBJ databases">
        <title>Complete sequence of chromosome of Yersinia pestis Pestoides F.</title>
        <authorList>
            <consortium name="US DOE Joint Genome Institute"/>
            <person name="Copeland A."/>
            <person name="Lucas S."/>
            <person name="Lapidus A."/>
            <person name="Barry K."/>
            <person name="Detter J.C."/>
            <person name="Glavina del Rio T."/>
            <person name="Hammon N."/>
            <person name="Israni S."/>
            <person name="Dalin E."/>
            <person name="Tice H."/>
            <person name="Pitluck S."/>
            <person name="Di Bartolo G."/>
            <person name="Chain P."/>
            <person name="Malfatti S."/>
            <person name="Shin M."/>
            <person name="Vergez L."/>
            <person name="Schmutz J."/>
            <person name="Larimer F."/>
            <person name="Land M."/>
            <person name="Hauser L."/>
            <person name="Worsham P."/>
            <person name="Chu M."/>
            <person name="Bearden S."/>
            <person name="Garcia E."/>
            <person name="Richardson P."/>
        </authorList>
    </citation>
    <scope>NUCLEOTIDE SEQUENCE [LARGE SCALE GENOMIC DNA]</scope>
    <source>
        <strain>Pestoides F</strain>
    </source>
</reference>
<sequence length="193" mass="20929">MYHDLIRSELNEAADTLANFLKDDSNIDAIQRAAILLADSFKAGGKVLSCGNGGSHCDAMHFAEELTGRYRENRPGYPAIAISDVSHLSCVSNDFGYDYVFSRYVEAVGREGDVLLGISTSGNSGNIIKAIEAARAKGMKVITLTGKDGGKMAGSADIEIRVPHFGYADRIQEIHIKVIHILIQLIEKEMVKA</sequence>
<name>GMHA_YERPP</name>
<proteinExistence type="inferred from homology"/>
<accession>A4TPM1</accession>